<proteinExistence type="inferred from homology"/>
<feature type="chain" id="PRO_0000292497" description="Class E vacuolar protein-sorting machinery protein HSE1">
    <location>
        <begin position="1"/>
        <end position="508"/>
    </location>
</feature>
<feature type="domain" description="VHS" evidence="4">
    <location>
        <begin position="14"/>
        <end position="144"/>
    </location>
</feature>
<feature type="domain" description="UIM" evidence="3">
    <location>
        <begin position="162"/>
        <end position="181"/>
    </location>
</feature>
<feature type="domain" description="SH3" evidence="2">
    <location>
        <begin position="222"/>
        <end position="281"/>
    </location>
</feature>
<feature type="region of interest" description="Disordered" evidence="5">
    <location>
        <begin position="143"/>
        <end position="163"/>
    </location>
</feature>
<feature type="region of interest" description="Disordered" evidence="5">
    <location>
        <begin position="385"/>
        <end position="508"/>
    </location>
</feature>
<feature type="compositionally biased region" description="Basic and acidic residues" evidence="5">
    <location>
        <begin position="143"/>
        <end position="162"/>
    </location>
</feature>
<feature type="compositionally biased region" description="Pro residues" evidence="5">
    <location>
        <begin position="385"/>
        <end position="400"/>
    </location>
</feature>
<feature type="compositionally biased region" description="Polar residues" evidence="5">
    <location>
        <begin position="401"/>
        <end position="419"/>
    </location>
</feature>
<feature type="compositionally biased region" description="Low complexity" evidence="5">
    <location>
        <begin position="429"/>
        <end position="449"/>
    </location>
</feature>
<feature type="compositionally biased region" description="Polar residues" evidence="5">
    <location>
        <begin position="450"/>
        <end position="470"/>
    </location>
</feature>
<feature type="compositionally biased region" description="Low complexity" evidence="5">
    <location>
        <begin position="483"/>
        <end position="497"/>
    </location>
</feature>
<feature type="compositionally biased region" description="Polar residues" evidence="5">
    <location>
        <begin position="499"/>
        <end position="508"/>
    </location>
</feature>
<sequence>MSSHPKVKKAIERATDPGLRVDNWGYLIEVCDLVKVDAEDRGQYAMKIIEERLLKQDANMILRTLSLVVALAENCGSRLQQAISSKHFTGILYKIVDDSQVHVAVKREVLKVVHQLADSFKNDPSLKYMHDLESKIKISHPELISEPRVPKKKEMSKDREVEEEKELAEALRLSLLEFEKTGSRQQVQQPQQQQQQQQQQQQQQQQKLYPQNAEAQQQQAPTVIRKVRAMYDFNSTEQDELSFKKGDLICVVEQVYRDWWRGTLAGSVGIFPLNYVTPVTEPSQQELAAERAKDEQVFAQKDNVDRLQNKLREAGNADITQDQEINDLYGSVSPIRPQISKMLGKYAQKKEDLVSLRQILANAEITYNQLLSRASNAYAYSAPPPAPMTGPAPTPGPQSPMSPTAQYTSPTNTQTQMNGIPNPPYSYPLPQQTQQIQQSEQTQQPLSQINSPQNYASSVGNTNYTGTNHIPQPLAPYPQYTGMSMQSIPPQQPQMPQHYNMSSNSNAQ</sequence>
<protein>
    <recommendedName>
        <fullName>Class E vacuolar protein-sorting machinery protein HSE1</fullName>
    </recommendedName>
</protein>
<evidence type="ECO:0000250" key="1"/>
<evidence type="ECO:0000255" key="2">
    <source>
        <dbReference type="PROSITE-ProRule" id="PRU00192"/>
    </source>
</evidence>
<evidence type="ECO:0000255" key="3">
    <source>
        <dbReference type="PROSITE-ProRule" id="PRU00213"/>
    </source>
</evidence>
<evidence type="ECO:0000255" key="4">
    <source>
        <dbReference type="PROSITE-ProRule" id="PRU00218"/>
    </source>
</evidence>
<evidence type="ECO:0000256" key="5">
    <source>
        <dbReference type="SAM" id="MobiDB-lite"/>
    </source>
</evidence>
<evidence type="ECO:0000305" key="6"/>
<keyword id="KW-0967">Endosome</keyword>
<keyword id="KW-0472">Membrane</keyword>
<keyword id="KW-0653">Protein transport</keyword>
<keyword id="KW-1185">Reference proteome</keyword>
<keyword id="KW-0728">SH3 domain</keyword>
<keyword id="KW-0813">Transport</keyword>
<organism>
    <name type="scientific">Kluyveromyces lactis (strain ATCC 8585 / CBS 2359 / DSM 70799 / NBRC 1267 / NRRL Y-1140 / WM37)</name>
    <name type="common">Yeast</name>
    <name type="synonym">Candida sphaerica</name>
    <dbReference type="NCBI Taxonomy" id="284590"/>
    <lineage>
        <taxon>Eukaryota</taxon>
        <taxon>Fungi</taxon>
        <taxon>Dikarya</taxon>
        <taxon>Ascomycota</taxon>
        <taxon>Saccharomycotina</taxon>
        <taxon>Saccharomycetes</taxon>
        <taxon>Saccharomycetales</taxon>
        <taxon>Saccharomycetaceae</taxon>
        <taxon>Kluyveromyces</taxon>
    </lineage>
</organism>
<dbReference type="EMBL" id="CR382122">
    <property type="protein sequence ID" value="CAH02524.1"/>
    <property type="molecule type" value="Genomic_DNA"/>
</dbReference>
<dbReference type="RefSeq" id="XP_452131.1">
    <property type="nucleotide sequence ID" value="XM_452131.1"/>
</dbReference>
<dbReference type="SMR" id="Q6CVA8"/>
<dbReference type="FunCoup" id="Q6CVA8">
    <property type="interactions" value="384"/>
</dbReference>
<dbReference type="STRING" id="284590.Q6CVA8"/>
<dbReference type="PaxDb" id="284590-Q6CVA8"/>
<dbReference type="KEGG" id="kla:KLLA0_B13475g"/>
<dbReference type="eggNOG" id="KOG2199">
    <property type="taxonomic scope" value="Eukaryota"/>
</dbReference>
<dbReference type="HOGENOM" id="CLU_010104_2_0_1"/>
<dbReference type="InParanoid" id="Q6CVA8"/>
<dbReference type="OMA" id="QVYRDWW"/>
<dbReference type="Proteomes" id="UP000000598">
    <property type="component" value="Chromosome B"/>
</dbReference>
<dbReference type="GO" id="GO:0010008">
    <property type="term" value="C:endosome membrane"/>
    <property type="evidence" value="ECO:0007669"/>
    <property type="project" value="UniProtKB-SubCell"/>
</dbReference>
<dbReference type="GO" id="GO:0033565">
    <property type="term" value="C:ESCRT-0 complex"/>
    <property type="evidence" value="ECO:0007669"/>
    <property type="project" value="TreeGrafter"/>
</dbReference>
<dbReference type="GO" id="GO:0035091">
    <property type="term" value="F:phosphatidylinositol binding"/>
    <property type="evidence" value="ECO:0007669"/>
    <property type="project" value="InterPro"/>
</dbReference>
<dbReference type="GO" id="GO:0043130">
    <property type="term" value="F:ubiquitin binding"/>
    <property type="evidence" value="ECO:0007669"/>
    <property type="project" value="InterPro"/>
</dbReference>
<dbReference type="GO" id="GO:0043328">
    <property type="term" value="P:protein transport to vacuole involved in ubiquitin-dependent protein catabolic process via the multivesicular body sorting pathway"/>
    <property type="evidence" value="ECO:0007669"/>
    <property type="project" value="TreeGrafter"/>
</dbReference>
<dbReference type="CDD" id="cd21386">
    <property type="entry name" value="GAT_Hse1"/>
    <property type="match status" value="1"/>
</dbReference>
<dbReference type="CDD" id="cd16978">
    <property type="entry name" value="VHS_HSE1"/>
    <property type="match status" value="1"/>
</dbReference>
<dbReference type="FunFam" id="2.30.30.40:FF:000072">
    <property type="entry name" value="Unconventional Myosin IB"/>
    <property type="match status" value="1"/>
</dbReference>
<dbReference type="Gene3D" id="1.20.5.1940">
    <property type="match status" value="1"/>
</dbReference>
<dbReference type="Gene3D" id="1.25.40.90">
    <property type="match status" value="1"/>
</dbReference>
<dbReference type="Gene3D" id="2.30.30.40">
    <property type="entry name" value="SH3 Domains"/>
    <property type="match status" value="1"/>
</dbReference>
<dbReference type="InterPro" id="IPR008942">
    <property type="entry name" value="ENTH_VHS"/>
</dbReference>
<dbReference type="InterPro" id="IPR036028">
    <property type="entry name" value="SH3-like_dom_sf"/>
</dbReference>
<dbReference type="InterPro" id="IPR001452">
    <property type="entry name" value="SH3_domain"/>
</dbReference>
<dbReference type="InterPro" id="IPR050670">
    <property type="entry name" value="STAM"/>
</dbReference>
<dbReference type="InterPro" id="IPR003903">
    <property type="entry name" value="UIM_dom"/>
</dbReference>
<dbReference type="InterPro" id="IPR002014">
    <property type="entry name" value="VHS_dom"/>
</dbReference>
<dbReference type="PANTHER" id="PTHR45929">
    <property type="entry name" value="JAK PATHWAY SIGNAL TRANSDUCTION ADAPTOR MOLECULE"/>
    <property type="match status" value="1"/>
</dbReference>
<dbReference type="PANTHER" id="PTHR45929:SF3">
    <property type="entry name" value="JAK PATHWAY SIGNAL TRANSDUCTION ADAPTOR MOLECULE"/>
    <property type="match status" value="1"/>
</dbReference>
<dbReference type="Pfam" id="PF00018">
    <property type="entry name" value="SH3_1"/>
    <property type="match status" value="1"/>
</dbReference>
<dbReference type="Pfam" id="PF00790">
    <property type="entry name" value="VHS"/>
    <property type="match status" value="1"/>
</dbReference>
<dbReference type="PRINTS" id="PR00499">
    <property type="entry name" value="P67PHOX"/>
</dbReference>
<dbReference type="PRINTS" id="PR00452">
    <property type="entry name" value="SH3DOMAIN"/>
</dbReference>
<dbReference type="SMART" id="SM00326">
    <property type="entry name" value="SH3"/>
    <property type="match status" value="1"/>
</dbReference>
<dbReference type="SMART" id="SM00288">
    <property type="entry name" value="VHS"/>
    <property type="match status" value="1"/>
</dbReference>
<dbReference type="SUPFAM" id="SSF81995">
    <property type="entry name" value="beta-sandwich domain of Sec23/24"/>
    <property type="match status" value="1"/>
</dbReference>
<dbReference type="SUPFAM" id="SSF48464">
    <property type="entry name" value="ENTH/VHS domain"/>
    <property type="match status" value="1"/>
</dbReference>
<dbReference type="SUPFAM" id="SSF50044">
    <property type="entry name" value="SH3-domain"/>
    <property type="match status" value="1"/>
</dbReference>
<dbReference type="PROSITE" id="PS50002">
    <property type="entry name" value="SH3"/>
    <property type="match status" value="1"/>
</dbReference>
<dbReference type="PROSITE" id="PS50330">
    <property type="entry name" value="UIM"/>
    <property type="match status" value="1"/>
</dbReference>
<dbReference type="PROSITE" id="PS50179">
    <property type="entry name" value="VHS"/>
    <property type="match status" value="1"/>
</dbReference>
<gene>
    <name type="primary">HSE1</name>
    <name type="ordered locus">KLLA0B13475g</name>
</gene>
<comment type="function">
    <text evidence="1">Component of the ESCRT-0 complex which is the sorting receptor for ubiquitinated cargo proteins at the multivesicular body (MVB).</text>
</comment>
<comment type="subunit">
    <text evidence="1">Component of the ESCRT-0 complex composed of HSE1 and VPS27.</text>
</comment>
<comment type="subcellular location">
    <subcellularLocation>
        <location evidence="1">Endosome membrane</location>
        <topology evidence="1">Peripheral membrane protein</topology>
        <orientation evidence="1">Cytoplasmic side</orientation>
    </subcellularLocation>
</comment>
<comment type="similarity">
    <text evidence="6">Belongs to the STAM family.</text>
</comment>
<name>HSE1_KLULA</name>
<reference key="1">
    <citation type="journal article" date="2004" name="Nature">
        <title>Genome evolution in yeasts.</title>
        <authorList>
            <person name="Dujon B."/>
            <person name="Sherman D."/>
            <person name="Fischer G."/>
            <person name="Durrens P."/>
            <person name="Casaregola S."/>
            <person name="Lafontaine I."/>
            <person name="de Montigny J."/>
            <person name="Marck C."/>
            <person name="Neuveglise C."/>
            <person name="Talla E."/>
            <person name="Goffard N."/>
            <person name="Frangeul L."/>
            <person name="Aigle M."/>
            <person name="Anthouard V."/>
            <person name="Babour A."/>
            <person name="Barbe V."/>
            <person name="Barnay S."/>
            <person name="Blanchin S."/>
            <person name="Beckerich J.-M."/>
            <person name="Beyne E."/>
            <person name="Bleykasten C."/>
            <person name="Boisrame A."/>
            <person name="Boyer J."/>
            <person name="Cattolico L."/>
            <person name="Confanioleri F."/>
            <person name="de Daruvar A."/>
            <person name="Despons L."/>
            <person name="Fabre E."/>
            <person name="Fairhead C."/>
            <person name="Ferry-Dumazet H."/>
            <person name="Groppi A."/>
            <person name="Hantraye F."/>
            <person name="Hennequin C."/>
            <person name="Jauniaux N."/>
            <person name="Joyet P."/>
            <person name="Kachouri R."/>
            <person name="Kerrest A."/>
            <person name="Koszul R."/>
            <person name="Lemaire M."/>
            <person name="Lesur I."/>
            <person name="Ma L."/>
            <person name="Muller H."/>
            <person name="Nicaud J.-M."/>
            <person name="Nikolski M."/>
            <person name="Oztas S."/>
            <person name="Ozier-Kalogeropoulos O."/>
            <person name="Pellenz S."/>
            <person name="Potier S."/>
            <person name="Richard G.-F."/>
            <person name="Straub M.-L."/>
            <person name="Suleau A."/>
            <person name="Swennen D."/>
            <person name="Tekaia F."/>
            <person name="Wesolowski-Louvel M."/>
            <person name="Westhof E."/>
            <person name="Wirth B."/>
            <person name="Zeniou-Meyer M."/>
            <person name="Zivanovic Y."/>
            <person name="Bolotin-Fukuhara M."/>
            <person name="Thierry A."/>
            <person name="Bouchier C."/>
            <person name="Caudron B."/>
            <person name="Scarpelli C."/>
            <person name="Gaillardin C."/>
            <person name="Weissenbach J."/>
            <person name="Wincker P."/>
            <person name="Souciet J.-L."/>
        </authorList>
    </citation>
    <scope>NUCLEOTIDE SEQUENCE [LARGE SCALE GENOMIC DNA]</scope>
    <source>
        <strain>ATCC 8585 / CBS 2359 / DSM 70799 / NBRC 1267 / NRRL Y-1140 / WM37</strain>
    </source>
</reference>
<accession>Q6CVA8</accession>